<sequence length="475" mass="52725">MSETFSPNLTFTEGFVLGQASFLIILLLFIRYVVFSPSEQIDHEGWRKRRAERADLLSNHTPPPLSNLLSKTSYDMSIHPAESSDWVNVLLAQILQGYRNDLLSEGGEEGARQRIEGWLNPKGENLSWLDPIDVTSLSLGTSYPLLSNARIRPADGQGRLRAEIDVDYLDSLSMTLSTAVLVNFPKPRFAVLPVTLGVELVSIGGTMSVQLHEPIEDRQHIHVNLLPDFHLNLKVTSLLGSRAKLQDIPKLEQLIVSRLRNLVQDRFVHPNHISLALPRILSPSVSSTPILEGLGEGAVDAMKDAVSDGMKRMVEDFMGENPVEGALNGQGEEQWLDDDFPPTPLVQPPGTFPTLSVSSRQSHRQSLPPSRPQSTTQGQPQLFYRRPLIHPTQSYPHYNTYTLDPQIPHSVSYRHPPRGSHVHNPPETPVPQRPSHGQGRMSTTSSLTPSQSQSQFRFRGQFASGVTPGQVGTSR</sequence>
<keyword id="KW-0256">Endoplasmic reticulum</keyword>
<keyword id="KW-0445">Lipid transport</keyword>
<keyword id="KW-0446">Lipid-binding</keyword>
<keyword id="KW-0472">Membrane</keyword>
<keyword id="KW-1185">Reference proteome</keyword>
<keyword id="KW-0812">Transmembrane</keyword>
<keyword id="KW-1133">Transmembrane helix</keyword>
<keyword id="KW-0813">Transport</keyword>
<protein>
    <recommendedName>
        <fullName evidence="1">Maintenance of mitochondrial morphology protein 1</fullName>
    </recommendedName>
</protein>
<dbReference type="EMBL" id="AE017348">
    <property type="protein sequence ID" value="AAW45073.1"/>
    <property type="molecule type" value="Genomic_DNA"/>
</dbReference>
<dbReference type="RefSeq" id="XP_572380.1">
    <property type="nucleotide sequence ID" value="XM_572380.1"/>
</dbReference>
<dbReference type="SMR" id="P0CO80"/>
<dbReference type="FunCoup" id="P0CO80">
    <property type="interactions" value="80"/>
</dbReference>
<dbReference type="STRING" id="214684.P0CO80"/>
<dbReference type="PaxDb" id="214684-P0CO80"/>
<dbReference type="EnsemblFungi" id="AAW45073">
    <property type="protein sequence ID" value="AAW45073"/>
    <property type="gene ID" value="CNH02060"/>
</dbReference>
<dbReference type="GeneID" id="3258985"/>
<dbReference type="KEGG" id="cne:CNH02060"/>
<dbReference type="VEuPathDB" id="FungiDB:CNH02060"/>
<dbReference type="eggNOG" id="ENOG502QUUW">
    <property type="taxonomic scope" value="Eukaryota"/>
</dbReference>
<dbReference type="HOGENOM" id="CLU_628531_0_0_1"/>
<dbReference type="InParanoid" id="P0CO80"/>
<dbReference type="OMA" id="EDRQHIH"/>
<dbReference type="OrthoDB" id="5599157at2759"/>
<dbReference type="Proteomes" id="UP000002149">
    <property type="component" value="Chromosome 8"/>
</dbReference>
<dbReference type="GO" id="GO:0005783">
    <property type="term" value="C:endoplasmic reticulum"/>
    <property type="evidence" value="ECO:0000318"/>
    <property type="project" value="GO_Central"/>
</dbReference>
<dbReference type="GO" id="GO:0005789">
    <property type="term" value="C:endoplasmic reticulum membrane"/>
    <property type="evidence" value="ECO:0007669"/>
    <property type="project" value="UniProtKB-SubCell"/>
</dbReference>
<dbReference type="GO" id="GO:0032865">
    <property type="term" value="C:ERMES complex"/>
    <property type="evidence" value="ECO:0000318"/>
    <property type="project" value="GO_Central"/>
</dbReference>
<dbReference type="GO" id="GO:0008289">
    <property type="term" value="F:lipid binding"/>
    <property type="evidence" value="ECO:0000318"/>
    <property type="project" value="GO_Central"/>
</dbReference>
<dbReference type="GO" id="GO:0015917">
    <property type="term" value="P:aminophospholipid transport"/>
    <property type="evidence" value="ECO:0000318"/>
    <property type="project" value="GO_Central"/>
</dbReference>
<dbReference type="GO" id="GO:0120009">
    <property type="term" value="P:intermembrane lipid transfer"/>
    <property type="evidence" value="ECO:0007669"/>
    <property type="project" value="GOC"/>
</dbReference>
<dbReference type="GO" id="GO:0000002">
    <property type="term" value="P:mitochondrial genome maintenance"/>
    <property type="evidence" value="ECO:0007669"/>
    <property type="project" value="UniProtKB-UniRule"/>
</dbReference>
<dbReference type="GO" id="GO:1990456">
    <property type="term" value="P:mitochondrion-endoplasmic reticulum membrane tethering"/>
    <property type="evidence" value="ECO:0000318"/>
    <property type="project" value="GO_Central"/>
</dbReference>
<dbReference type="GO" id="GO:0045040">
    <property type="term" value="P:protein insertion into mitochondrial outer membrane"/>
    <property type="evidence" value="ECO:0007669"/>
    <property type="project" value="UniProtKB-UniRule"/>
</dbReference>
<dbReference type="CDD" id="cd21671">
    <property type="entry name" value="SMP_Mmm1"/>
    <property type="match status" value="1"/>
</dbReference>
<dbReference type="HAMAP" id="MF_03103">
    <property type="entry name" value="Mmm1"/>
    <property type="match status" value="1"/>
</dbReference>
<dbReference type="InterPro" id="IPR027537">
    <property type="entry name" value="Mmm1"/>
</dbReference>
<dbReference type="InterPro" id="IPR019411">
    <property type="entry name" value="MMM1_dom"/>
</dbReference>
<dbReference type="InterPro" id="IPR031468">
    <property type="entry name" value="SMP_LBD"/>
</dbReference>
<dbReference type="PANTHER" id="PTHR13466:SF0">
    <property type="entry name" value="SMP-LTD DOMAIN-CONTAINING PROTEIN"/>
    <property type="match status" value="1"/>
</dbReference>
<dbReference type="PANTHER" id="PTHR13466">
    <property type="entry name" value="TEX2 PROTEIN-RELATED"/>
    <property type="match status" value="1"/>
</dbReference>
<dbReference type="Pfam" id="PF10296">
    <property type="entry name" value="MMM1"/>
    <property type="match status" value="2"/>
</dbReference>
<dbReference type="PROSITE" id="PS51847">
    <property type="entry name" value="SMP"/>
    <property type="match status" value="1"/>
</dbReference>
<evidence type="ECO:0000255" key="1">
    <source>
        <dbReference type="HAMAP-Rule" id="MF_03103"/>
    </source>
</evidence>
<evidence type="ECO:0000256" key="2">
    <source>
        <dbReference type="SAM" id="MobiDB-lite"/>
    </source>
</evidence>
<comment type="function">
    <text evidence="1">Component of the ERMES/MDM complex, which serves as a molecular tether to connect the endoplasmic reticulum (ER) and mitochondria. Components of this complex are involved in the control of mitochondrial shape and protein biogenesis, and function in nonvesicular lipid trafficking between the ER and mitochondria. The MDM12-MMM1 subcomplex functions in the major beta-barrel assembly pathway that is responsible for biogenesis of all outer membrane beta-barrel proteins, and acts in a late step after the SAM complex. The MDM10-MDM12-MMM1 subcomplex further acts in the TOM40-specific pathway after the action of the MDM12-MMM1 complex. Essential for establishing and maintaining the structure of mitochondria and maintenance of mtDNA nucleoids.</text>
</comment>
<comment type="subunit">
    <text evidence="1">Homodimer. Component of the ER-mitochondria encounter structure (ERMES) or MDM complex, composed of MMM1, MDM10, MDM12 and MDM34. A MMM1 homodimer associates with one molecule of MDM12 on each side in a pairwise head-to-tail manner, and the SMP-LTD domains of MMM1 and MDM12 generate a continuous hydrophobic tunnel for phospholipid trafficking.</text>
</comment>
<comment type="subcellular location">
    <subcellularLocation>
        <location evidence="1">Endoplasmic reticulum membrane</location>
        <topology evidence="1">Single-pass type I membrane protein</topology>
    </subcellularLocation>
    <text evidence="1">The ERMES/MDM complex localizes to a few discrete foci (around 10 per single cell), that represent mitochondria-endoplasmic reticulum junctions. These foci are often found next to mtDNA nucleoids.</text>
</comment>
<comment type="domain">
    <text evidence="1">The SMP-LTD domain is a barrel-like domain that can bind various types of glycerophospholipids in its interior and mediate their transfer between two adjacent bilayers.</text>
</comment>
<comment type="similarity">
    <text evidence="1">Belongs to the MMM1 family.</text>
</comment>
<name>MMM1_CRYNJ</name>
<gene>
    <name evidence="1" type="primary">MMM1</name>
    <name type="ordered locus">CNH02060</name>
</gene>
<feature type="chain" id="PRO_0000384228" description="Maintenance of mitochondrial morphology protein 1">
    <location>
        <begin position="1"/>
        <end position="475"/>
    </location>
</feature>
<feature type="topological domain" description="Lumenal" evidence="1">
    <location>
        <begin position="1"/>
        <end position="14"/>
    </location>
</feature>
<feature type="transmembrane region" description="Helical" evidence="1">
    <location>
        <begin position="15"/>
        <end position="35"/>
    </location>
</feature>
<feature type="topological domain" description="Cytoplasmic" evidence="1">
    <location>
        <begin position="36"/>
        <end position="475"/>
    </location>
</feature>
<feature type="domain" description="SMP-LTD" evidence="1">
    <location>
        <begin position="80"/>
        <end position="278"/>
    </location>
</feature>
<feature type="region of interest" description="Disordered" evidence="2">
    <location>
        <begin position="321"/>
        <end position="381"/>
    </location>
</feature>
<feature type="region of interest" description="Disordered" evidence="2">
    <location>
        <begin position="394"/>
        <end position="475"/>
    </location>
</feature>
<feature type="compositionally biased region" description="Pro residues" evidence="2">
    <location>
        <begin position="341"/>
        <end position="351"/>
    </location>
</feature>
<feature type="compositionally biased region" description="Polar residues" evidence="2">
    <location>
        <begin position="353"/>
        <end position="380"/>
    </location>
</feature>
<feature type="compositionally biased region" description="Polar residues" evidence="2">
    <location>
        <begin position="394"/>
        <end position="403"/>
    </location>
</feature>
<feature type="compositionally biased region" description="Low complexity" evidence="2">
    <location>
        <begin position="442"/>
        <end position="464"/>
    </location>
</feature>
<accession>P0CO80</accession>
<accession>Q55IY0</accession>
<accession>Q5KCS3</accession>
<proteinExistence type="inferred from homology"/>
<organism>
    <name type="scientific">Cryptococcus neoformans var. neoformans serotype D (strain JEC21 / ATCC MYA-565)</name>
    <name type="common">Filobasidiella neoformans</name>
    <dbReference type="NCBI Taxonomy" id="214684"/>
    <lineage>
        <taxon>Eukaryota</taxon>
        <taxon>Fungi</taxon>
        <taxon>Dikarya</taxon>
        <taxon>Basidiomycota</taxon>
        <taxon>Agaricomycotina</taxon>
        <taxon>Tremellomycetes</taxon>
        <taxon>Tremellales</taxon>
        <taxon>Cryptococcaceae</taxon>
        <taxon>Cryptococcus</taxon>
        <taxon>Cryptococcus neoformans species complex</taxon>
    </lineage>
</organism>
<reference key="1">
    <citation type="journal article" date="2005" name="Science">
        <title>The genome of the basidiomycetous yeast and human pathogen Cryptococcus neoformans.</title>
        <authorList>
            <person name="Loftus B.J."/>
            <person name="Fung E."/>
            <person name="Roncaglia P."/>
            <person name="Rowley D."/>
            <person name="Amedeo P."/>
            <person name="Bruno D."/>
            <person name="Vamathevan J."/>
            <person name="Miranda M."/>
            <person name="Anderson I.J."/>
            <person name="Fraser J.A."/>
            <person name="Allen J.E."/>
            <person name="Bosdet I.E."/>
            <person name="Brent M.R."/>
            <person name="Chiu R."/>
            <person name="Doering T.L."/>
            <person name="Donlin M.J."/>
            <person name="D'Souza C.A."/>
            <person name="Fox D.S."/>
            <person name="Grinberg V."/>
            <person name="Fu J."/>
            <person name="Fukushima M."/>
            <person name="Haas B.J."/>
            <person name="Huang J.C."/>
            <person name="Janbon G."/>
            <person name="Jones S.J.M."/>
            <person name="Koo H.L."/>
            <person name="Krzywinski M.I."/>
            <person name="Kwon-Chung K.J."/>
            <person name="Lengeler K.B."/>
            <person name="Maiti R."/>
            <person name="Marra M.A."/>
            <person name="Marra R.E."/>
            <person name="Mathewson C.A."/>
            <person name="Mitchell T.G."/>
            <person name="Pertea M."/>
            <person name="Riggs F.R."/>
            <person name="Salzberg S.L."/>
            <person name="Schein J.E."/>
            <person name="Shvartsbeyn A."/>
            <person name="Shin H."/>
            <person name="Shumway M."/>
            <person name="Specht C.A."/>
            <person name="Suh B.B."/>
            <person name="Tenney A."/>
            <person name="Utterback T.R."/>
            <person name="Wickes B.L."/>
            <person name="Wortman J.R."/>
            <person name="Wye N.H."/>
            <person name="Kronstad J.W."/>
            <person name="Lodge J.K."/>
            <person name="Heitman J."/>
            <person name="Davis R.W."/>
            <person name="Fraser C.M."/>
            <person name="Hyman R.W."/>
        </authorList>
    </citation>
    <scope>NUCLEOTIDE SEQUENCE [LARGE SCALE GENOMIC DNA]</scope>
    <source>
        <strain>JEC21 / ATCC MYA-565</strain>
    </source>
</reference>